<organism>
    <name type="scientific">Neisseria lactamica</name>
    <dbReference type="NCBI Taxonomy" id="486"/>
    <lineage>
        <taxon>Bacteria</taxon>
        <taxon>Pseudomonadati</taxon>
        <taxon>Pseudomonadota</taxon>
        <taxon>Betaproteobacteria</taxon>
        <taxon>Neisseriales</taxon>
        <taxon>Neisseriaceae</taxon>
        <taxon>Neisseria</taxon>
    </lineage>
</organism>
<gene>
    <name type="primary">mrcA</name>
    <name type="synonym">ponA</name>
</gene>
<keyword id="KW-0046">Antibiotic resistance</keyword>
<keyword id="KW-0121">Carboxypeptidase</keyword>
<keyword id="KW-0997">Cell inner membrane</keyword>
<keyword id="KW-1003">Cell membrane</keyword>
<keyword id="KW-0133">Cell shape</keyword>
<keyword id="KW-0961">Cell wall biogenesis/degradation</keyword>
<keyword id="KW-0328">Glycosyltransferase</keyword>
<keyword id="KW-0378">Hydrolase</keyword>
<keyword id="KW-0472">Membrane</keyword>
<keyword id="KW-0511">Multifunctional enzyme</keyword>
<keyword id="KW-0573">Peptidoglycan synthesis</keyword>
<keyword id="KW-0645">Protease</keyword>
<keyword id="KW-0735">Signal-anchor</keyword>
<keyword id="KW-0808">Transferase</keyword>
<keyword id="KW-0812">Transmembrane</keyword>
<keyword id="KW-1133">Transmembrane helix</keyword>
<protein>
    <recommendedName>
        <fullName>Penicillin-binding protein 1A</fullName>
        <shortName>PBP-1a</shortName>
        <shortName>PBP1a</shortName>
    </recommendedName>
    <domain>
        <recommendedName>
            <fullName>Penicillin-insensitive transglycosylase</fullName>
            <ecNumber evidence="2">2.4.99.28</ecNumber>
        </recommendedName>
        <alternativeName>
            <fullName>Peptidoglycan TGase</fullName>
        </alternativeName>
    </domain>
    <domain>
        <recommendedName>
            <fullName>Penicillin-sensitive transpeptidase</fullName>
            <ecNumber evidence="2">3.4.16.4</ecNumber>
        </recommendedName>
        <alternativeName>
            <fullName>DD-transpeptidase</fullName>
        </alternativeName>
    </domain>
</protein>
<reference key="1">
    <citation type="submission" date="1998-08" db="EMBL/GenBank/DDBJ databases">
        <title>Nucleotide sequence of the ponA gene encoding penicillin-binding protein 1 from Neisseria lactamica.</title>
        <authorList>
            <person name="Ropp P.A."/>
            <person name="Nicholas R.A."/>
        </authorList>
    </citation>
    <scope>NUCLEOTIDE SEQUENCE [GENOMIC DNA]</scope>
    <source>
        <strain>NRL 3716</strain>
    </source>
</reference>
<accession>O87579</accession>
<evidence type="ECO:0000250" key="1"/>
<evidence type="ECO:0000250" key="2">
    <source>
        <dbReference type="UniProtKB" id="P02918"/>
    </source>
</evidence>
<evidence type="ECO:0000250" key="3">
    <source>
        <dbReference type="UniProtKB" id="P02919"/>
    </source>
</evidence>
<evidence type="ECO:0000255" key="4"/>
<evidence type="ECO:0000256" key="5">
    <source>
        <dbReference type="SAM" id="MobiDB-lite"/>
    </source>
</evidence>
<evidence type="ECO:0000305" key="6"/>
<name>PBPA_NEILA</name>
<proteinExistence type="inferred from homology"/>
<dbReference type="EC" id="2.4.99.28" evidence="2"/>
<dbReference type="EC" id="3.4.16.4" evidence="2"/>
<dbReference type="EMBL" id="AF085689">
    <property type="protein sequence ID" value="AAC35363.1"/>
    <property type="molecule type" value="Genomic_DNA"/>
</dbReference>
<dbReference type="SMR" id="O87579"/>
<dbReference type="STRING" id="486.B2G52_04360"/>
<dbReference type="CAZy" id="GT51">
    <property type="family name" value="Glycosyltransferase Family 51"/>
</dbReference>
<dbReference type="UniPathway" id="UPA00219"/>
<dbReference type="GO" id="GO:0030288">
    <property type="term" value="C:outer membrane-bounded periplasmic space"/>
    <property type="evidence" value="ECO:0007669"/>
    <property type="project" value="TreeGrafter"/>
</dbReference>
<dbReference type="GO" id="GO:0005886">
    <property type="term" value="C:plasma membrane"/>
    <property type="evidence" value="ECO:0007669"/>
    <property type="project" value="UniProtKB-SubCell"/>
</dbReference>
<dbReference type="GO" id="GO:0008658">
    <property type="term" value="F:penicillin binding"/>
    <property type="evidence" value="ECO:0007669"/>
    <property type="project" value="InterPro"/>
</dbReference>
<dbReference type="GO" id="GO:0008955">
    <property type="term" value="F:peptidoglycan glycosyltransferase activity"/>
    <property type="evidence" value="ECO:0007669"/>
    <property type="project" value="RHEA"/>
</dbReference>
<dbReference type="GO" id="GO:0009002">
    <property type="term" value="F:serine-type D-Ala-D-Ala carboxypeptidase activity"/>
    <property type="evidence" value="ECO:0007669"/>
    <property type="project" value="UniProtKB-EC"/>
</dbReference>
<dbReference type="GO" id="GO:0071555">
    <property type="term" value="P:cell wall organization"/>
    <property type="evidence" value="ECO:0007669"/>
    <property type="project" value="UniProtKB-KW"/>
</dbReference>
<dbReference type="GO" id="GO:0009252">
    <property type="term" value="P:peptidoglycan biosynthetic process"/>
    <property type="evidence" value="ECO:0007669"/>
    <property type="project" value="UniProtKB-UniPathway"/>
</dbReference>
<dbReference type="GO" id="GO:0006508">
    <property type="term" value="P:proteolysis"/>
    <property type="evidence" value="ECO:0007669"/>
    <property type="project" value="UniProtKB-KW"/>
</dbReference>
<dbReference type="GO" id="GO:0008360">
    <property type="term" value="P:regulation of cell shape"/>
    <property type="evidence" value="ECO:0007669"/>
    <property type="project" value="UniProtKB-KW"/>
</dbReference>
<dbReference type="GO" id="GO:0046677">
    <property type="term" value="P:response to antibiotic"/>
    <property type="evidence" value="ECO:0007669"/>
    <property type="project" value="UniProtKB-KW"/>
</dbReference>
<dbReference type="FunFam" id="3.40.710.10:FF:000041">
    <property type="entry name" value="Penicillin-binding protein 1A"/>
    <property type="match status" value="1"/>
</dbReference>
<dbReference type="FunFam" id="1.10.3810.10:FF:000003">
    <property type="entry name" value="Penicillin-binding protein 1a"/>
    <property type="match status" value="1"/>
</dbReference>
<dbReference type="Gene3D" id="1.10.3810.10">
    <property type="entry name" value="Biosynthetic peptidoglycan transglycosylase-like"/>
    <property type="match status" value="1"/>
</dbReference>
<dbReference type="Gene3D" id="3.40.710.10">
    <property type="entry name" value="DD-peptidase/beta-lactamase superfamily"/>
    <property type="match status" value="2"/>
</dbReference>
<dbReference type="InterPro" id="IPR012338">
    <property type="entry name" value="Beta-lactam/transpept-like"/>
</dbReference>
<dbReference type="InterPro" id="IPR001264">
    <property type="entry name" value="Glyco_trans_51"/>
</dbReference>
<dbReference type="InterPro" id="IPR050396">
    <property type="entry name" value="Glycosyltr_51/Transpeptidase"/>
</dbReference>
<dbReference type="InterPro" id="IPR023346">
    <property type="entry name" value="Lysozyme-like_dom_sf"/>
</dbReference>
<dbReference type="InterPro" id="IPR036950">
    <property type="entry name" value="PBP_transglycosylase"/>
</dbReference>
<dbReference type="InterPro" id="IPR031376">
    <property type="entry name" value="PCB_OB"/>
</dbReference>
<dbReference type="InterPro" id="IPR001460">
    <property type="entry name" value="PCN-bd_Tpept"/>
</dbReference>
<dbReference type="NCBIfam" id="TIGR02074">
    <property type="entry name" value="PBP_1a_fam"/>
    <property type="match status" value="1"/>
</dbReference>
<dbReference type="PANTHER" id="PTHR32282">
    <property type="entry name" value="BINDING PROTEIN TRANSPEPTIDASE, PUTATIVE-RELATED"/>
    <property type="match status" value="1"/>
</dbReference>
<dbReference type="PANTHER" id="PTHR32282:SF27">
    <property type="entry name" value="PENICILLIN-BINDING PROTEIN 1A"/>
    <property type="match status" value="1"/>
</dbReference>
<dbReference type="Pfam" id="PF17092">
    <property type="entry name" value="PCB_OB"/>
    <property type="match status" value="1"/>
</dbReference>
<dbReference type="Pfam" id="PF00912">
    <property type="entry name" value="Transgly"/>
    <property type="match status" value="1"/>
</dbReference>
<dbReference type="Pfam" id="PF00905">
    <property type="entry name" value="Transpeptidase"/>
    <property type="match status" value="1"/>
</dbReference>
<dbReference type="SUPFAM" id="SSF56601">
    <property type="entry name" value="beta-lactamase/transpeptidase-like"/>
    <property type="match status" value="1"/>
</dbReference>
<dbReference type="SUPFAM" id="SSF53955">
    <property type="entry name" value="Lysozyme-like"/>
    <property type="match status" value="1"/>
</dbReference>
<comment type="function">
    <text evidence="1">Cell wall formation. Synthesis of cross-linked peptidoglycan from the lipid intermediates. The enzyme has a penicillin-insensitive transglycosylase N-terminal domain (formation of linear glycan strands) and a penicillin-sensitive transpeptidase C-terminal domain (cross-linking of the peptide subunits).</text>
</comment>
<comment type="catalytic activity">
    <reaction evidence="2">
        <text>[GlcNAc-(1-&gt;4)-Mur2Ac(oyl-L-Ala-gamma-D-Glu-L-Lys-D-Ala-D-Ala)](n)-di-trans,octa-cis-undecaprenyl diphosphate + beta-D-GlcNAc-(1-&gt;4)-Mur2Ac(oyl-L-Ala-gamma-D-Glu-L-Lys-D-Ala-D-Ala)-di-trans,octa-cis-undecaprenyl diphosphate = [GlcNAc-(1-&gt;4)-Mur2Ac(oyl-L-Ala-gamma-D-Glu-L-Lys-D-Ala-D-Ala)](n+1)-di-trans,octa-cis-undecaprenyl diphosphate + di-trans,octa-cis-undecaprenyl diphosphate + H(+)</text>
        <dbReference type="Rhea" id="RHEA:23708"/>
        <dbReference type="Rhea" id="RHEA-COMP:9602"/>
        <dbReference type="Rhea" id="RHEA-COMP:9603"/>
        <dbReference type="ChEBI" id="CHEBI:15378"/>
        <dbReference type="ChEBI" id="CHEBI:58405"/>
        <dbReference type="ChEBI" id="CHEBI:60033"/>
        <dbReference type="ChEBI" id="CHEBI:78435"/>
        <dbReference type="EC" id="2.4.99.28"/>
    </reaction>
</comment>
<comment type="catalytic activity">
    <reaction evidence="2">
        <text>Preferential cleavage: (Ac)2-L-Lys-D-Ala-|-D-Ala. Also transpeptidation of peptidyl-alanyl moieties that are N-acyl substituents of D-alanine.</text>
        <dbReference type="EC" id="3.4.16.4"/>
    </reaction>
</comment>
<comment type="pathway">
    <text>Cell wall biogenesis; peptidoglycan biosynthesis.</text>
</comment>
<comment type="subcellular location">
    <subcellularLocation>
        <location evidence="1">Cell inner membrane</location>
        <topology evidence="1">Single-pass type II membrane protein</topology>
    </subcellularLocation>
</comment>
<comment type="similarity">
    <text evidence="6">In the N-terminal section; belongs to the glycosyltransferase 51 family.</text>
</comment>
<comment type="similarity">
    <text evidence="6">In the C-terminal section; belongs to the transpeptidase family.</text>
</comment>
<feature type="chain" id="PRO_0000083170" description="Penicillin-binding protein 1A">
    <location>
        <begin position="1"/>
        <end position="798"/>
    </location>
</feature>
<feature type="topological domain" description="Cytoplasmic" evidence="4">
    <location>
        <begin position="1"/>
        <end position="9"/>
    </location>
</feature>
<feature type="transmembrane region" description="Helical; Signal-anchor for type II membrane protein" evidence="4">
    <location>
        <begin position="10"/>
        <end position="30"/>
    </location>
</feature>
<feature type="topological domain" description="Periplasmic" evidence="4">
    <location>
        <begin position="31"/>
        <end position="798"/>
    </location>
</feature>
<feature type="region of interest" description="Transglycosylase">
    <location>
        <begin position="50"/>
        <end position="218"/>
    </location>
</feature>
<feature type="region of interest" description="Transpeptidase">
    <location>
        <begin position="378"/>
        <end position="700"/>
    </location>
</feature>
<feature type="region of interest" description="Disordered" evidence="5">
    <location>
        <begin position="739"/>
        <end position="798"/>
    </location>
</feature>
<feature type="compositionally biased region" description="Basic and acidic residues" evidence="5">
    <location>
        <begin position="765"/>
        <end position="777"/>
    </location>
</feature>
<feature type="compositionally biased region" description="Basic and acidic residues" evidence="5">
    <location>
        <begin position="788"/>
        <end position="798"/>
    </location>
</feature>
<feature type="active site" description="Proton donor; for transglycosylase activity" evidence="3">
    <location>
        <position position="88"/>
    </location>
</feature>
<feature type="active site" description="Acyl-ester intermediate; for transpeptidase activity" evidence="3">
    <location>
        <position position="461"/>
    </location>
</feature>
<sequence length="798" mass="88109">MIKKIMTTCFGLVFGLCVFAVGLLAIAILATYPKLPSLDSLQHYQPKMPLTVYSADGKIIGIYGEQRREFTKIGDFPEVLRNAVIAAEDKRFYQHWGVDVWGVARAVVGNIVSGSMQSGASTITQQVAKNFYLSSEKTFTRKFNEALLAYKIEQSLSKDKILELYFNQIYLGQRAYGFASAAQIYFNKDVRDLTLAEAAMLAGLPKAPSAYNPIVNPERAKLRQKYILNNMLEEKMITLQQRDQALNEELHYERFVQKIDQSALYVAEMVRQELYEKYGEDAYTQGLKVYTTVRTDHQKAATEALRKALRNFDRGSSYRGAESYIDLGRDEDAEEAVSQYLSGLYTVDKMVPAVVLDVTKKKNVVIQLPGGKRVTLDRRALGFAARAVDNEKMGEDRIRRGAVIRVRNNGGRWAVVQEPLLQGALVSLDAKTGAVRALVGGYDFHSKTFNRATQAMRQPGSTFKPFVYSAALSKGMTASTMINDAPISLPGKGPNGSVWTPKNSDGRYSGYITLRQALTASKNMVSIRILMSIGVGYAQQYIRRFGFKPSELPVSLSMALGTGETTPLRIAEAYSVFANGGYRVSSYVIDKIYDSEGRLRAQMQPLVAGQNAPQAIDPRNAYIMYKIMQDVVRVGTARGASALGRSDIAGKTGTTNDNKDAWFVGFNPDVVTAVYIGFDKPKSMGRAGYGGTIAVPVWVDYMRFALKGRPGKGMKMPDGVVAGNGEYYMKEHMVTDPGLMLDNGGAAPQPSRRVKEDDGGAAEGGRQEADDESRQDMQETPVLPSNTDSKRQQLDSLF</sequence>